<accession>Q8ZMK6</accession>
<feature type="chain" id="PRO_0000075197" description="Alanine--tRNA ligase">
    <location>
        <begin position="1"/>
        <end position="876"/>
    </location>
</feature>
<feature type="binding site" evidence="1">
    <location>
        <position position="564"/>
    </location>
    <ligand>
        <name>Zn(2+)</name>
        <dbReference type="ChEBI" id="CHEBI:29105"/>
    </ligand>
</feature>
<feature type="binding site" evidence="1">
    <location>
        <position position="568"/>
    </location>
    <ligand>
        <name>Zn(2+)</name>
        <dbReference type="ChEBI" id="CHEBI:29105"/>
    </ligand>
</feature>
<feature type="binding site" evidence="1">
    <location>
        <position position="666"/>
    </location>
    <ligand>
        <name>Zn(2+)</name>
        <dbReference type="ChEBI" id="CHEBI:29105"/>
    </ligand>
</feature>
<feature type="binding site" evidence="1">
    <location>
        <position position="670"/>
    </location>
    <ligand>
        <name>Zn(2+)</name>
        <dbReference type="ChEBI" id="CHEBI:29105"/>
    </ligand>
</feature>
<keyword id="KW-0030">Aminoacyl-tRNA synthetase</keyword>
<keyword id="KW-0067">ATP-binding</keyword>
<keyword id="KW-0963">Cytoplasm</keyword>
<keyword id="KW-0436">Ligase</keyword>
<keyword id="KW-0479">Metal-binding</keyword>
<keyword id="KW-0547">Nucleotide-binding</keyword>
<keyword id="KW-0648">Protein biosynthesis</keyword>
<keyword id="KW-1185">Reference proteome</keyword>
<keyword id="KW-0694">RNA-binding</keyword>
<keyword id="KW-0820">tRNA-binding</keyword>
<keyword id="KW-0862">Zinc</keyword>
<dbReference type="EC" id="6.1.1.7" evidence="1"/>
<dbReference type="EMBL" id="AE006468">
    <property type="protein sequence ID" value="AAL21707.1"/>
    <property type="molecule type" value="Genomic_DNA"/>
</dbReference>
<dbReference type="RefSeq" id="NP_461748.1">
    <property type="nucleotide sequence ID" value="NC_003197.2"/>
</dbReference>
<dbReference type="RefSeq" id="WP_000047224.1">
    <property type="nucleotide sequence ID" value="NC_003197.2"/>
</dbReference>
<dbReference type="SMR" id="Q8ZMK6"/>
<dbReference type="STRING" id="99287.STM2827"/>
<dbReference type="PaxDb" id="99287-STM2827"/>
<dbReference type="GeneID" id="1254350"/>
<dbReference type="KEGG" id="stm:STM2827"/>
<dbReference type="PATRIC" id="fig|99287.12.peg.2981"/>
<dbReference type="HOGENOM" id="CLU_004485_1_1_6"/>
<dbReference type="OMA" id="NKKDNFW"/>
<dbReference type="PhylomeDB" id="Q8ZMK6"/>
<dbReference type="BioCyc" id="SENT99287:STM2827-MONOMER"/>
<dbReference type="Proteomes" id="UP000001014">
    <property type="component" value="Chromosome"/>
</dbReference>
<dbReference type="GO" id="GO:0005829">
    <property type="term" value="C:cytosol"/>
    <property type="evidence" value="ECO:0000318"/>
    <property type="project" value="GO_Central"/>
</dbReference>
<dbReference type="GO" id="GO:0004813">
    <property type="term" value="F:alanine-tRNA ligase activity"/>
    <property type="evidence" value="ECO:0000318"/>
    <property type="project" value="GO_Central"/>
</dbReference>
<dbReference type="GO" id="GO:0002161">
    <property type="term" value="F:aminoacyl-tRNA deacylase activity"/>
    <property type="evidence" value="ECO:0000318"/>
    <property type="project" value="GO_Central"/>
</dbReference>
<dbReference type="GO" id="GO:0005524">
    <property type="term" value="F:ATP binding"/>
    <property type="evidence" value="ECO:0007669"/>
    <property type="project" value="UniProtKB-UniRule"/>
</dbReference>
<dbReference type="GO" id="GO:0000049">
    <property type="term" value="F:tRNA binding"/>
    <property type="evidence" value="ECO:0007669"/>
    <property type="project" value="UniProtKB-KW"/>
</dbReference>
<dbReference type="GO" id="GO:0008270">
    <property type="term" value="F:zinc ion binding"/>
    <property type="evidence" value="ECO:0007669"/>
    <property type="project" value="UniProtKB-UniRule"/>
</dbReference>
<dbReference type="GO" id="GO:0006419">
    <property type="term" value="P:alanyl-tRNA aminoacylation"/>
    <property type="evidence" value="ECO:0000318"/>
    <property type="project" value="GO_Central"/>
</dbReference>
<dbReference type="GO" id="GO:0045892">
    <property type="term" value="P:negative regulation of DNA-templated transcription"/>
    <property type="evidence" value="ECO:0000318"/>
    <property type="project" value="GO_Central"/>
</dbReference>
<dbReference type="CDD" id="cd00673">
    <property type="entry name" value="AlaRS_core"/>
    <property type="match status" value="1"/>
</dbReference>
<dbReference type="FunFam" id="2.40.30.130:FF:000001">
    <property type="entry name" value="Alanine--tRNA ligase"/>
    <property type="match status" value="1"/>
</dbReference>
<dbReference type="FunFam" id="3.10.310.40:FF:000001">
    <property type="entry name" value="Alanine--tRNA ligase"/>
    <property type="match status" value="1"/>
</dbReference>
<dbReference type="FunFam" id="3.30.54.20:FF:000001">
    <property type="entry name" value="Alanine--tRNA ligase"/>
    <property type="match status" value="1"/>
</dbReference>
<dbReference type="FunFam" id="3.30.930.10:FF:000004">
    <property type="entry name" value="Alanine--tRNA ligase"/>
    <property type="match status" value="1"/>
</dbReference>
<dbReference type="FunFam" id="3.30.980.10:FF:000004">
    <property type="entry name" value="Alanine--tRNA ligase, cytoplasmic"/>
    <property type="match status" value="1"/>
</dbReference>
<dbReference type="Gene3D" id="2.40.30.130">
    <property type="match status" value="1"/>
</dbReference>
<dbReference type="Gene3D" id="3.10.310.40">
    <property type="match status" value="1"/>
</dbReference>
<dbReference type="Gene3D" id="3.30.54.20">
    <property type="match status" value="1"/>
</dbReference>
<dbReference type="Gene3D" id="6.10.250.550">
    <property type="match status" value="1"/>
</dbReference>
<dbReference type="Gene3D" id="3.30.930.10">
    <property type="entry name" value="Bira Bifunctional Protein, Domain 2"/>
    <property type="match status" value="1"/>
</dbReference>
<dbReference type="Gene3D" id="3.30.980.10">
    <property type="entry name" value="Threonyl-trna Synthetase, Chain A, domain 2"/>
    <property type="match status" value="1"/>
</dbReference>
<dbReference type="HAMAP" id="MF_00036_B">
    <property type="entry name" value="Ala_tRNA_synth_B"/>
    <property type="match status" value="1"/>
</dbReference>
<dbReference type="InterPro" id="IPR045864">
    <property type="entry name" value="aa-tRNA-synth_II/BPL/LPL"/>
</dbReference>
<dbReference type="InterPro" id="IPR002318">
    <property type="entry name" value="Ala-tRNA-lgiase_IIc"/>
</dbReference>
<dbReference type="InterPro" id="IPR018162">
    <property type="entry name" value="Ala-tRNA-ligase_IIc_anticod-bd"/>
</dbReference>
<dbReference type="InterPro" id="IPR018165">
    <property type="entry name" value="Ala-tRNA-synth_IIc_core"/>
</dbReference>
<dbReference type="InterPro" id="IPR018164">
    <property type="entry name" value="Ala-tRNA-synth_IIc_N"/>
</dbReference>
<dbReference type="InterPro" id="IPR050058">
    <property type="entry name" value="Ala-tRNA_ligase"/>
</dbReference>
<dbReference type="InterPro" id="IPR023033">
    <property type="entry name" value="Ala_tRNA_ligase_euk/bac"/>
</dbReference>
<dbReference type="InterPro" id="IPR003156">
    <property type="entry name" value="DHHA1_dom"/>
</dbReference>
<dbReference type="InterPro" id="IPR018163">
    <property type="entry name" value="Thr/Ala-tRNA-synth_IIc_edit"/>
</dbReference>
<dbReference type="InterPro" id="IPR009000">
    <property type="entry name" value="Transl_B-barrel_sf"/>
</dbReference>
<dbReference type="InterPro" id="IPR012947">
    <property type="entry name" value="tRNA_SAD"/>
</dbReference>
<dbReference type="NCBIfam" id="TIGR00344">
    <property type="entry name" value="alaS"/>
    <property type="match status" value="1"/>
</dbReference>
<dbReference type="PANTHER" id="PTHR11777:SF9">
    <property type="entry name" value="ALANINE--TRNA LIGASE, CYTOPLASMIC"/>
    <property type="match status" value="1"/>
</dbReference>
<dbReference type="PANTHER" id="PTHR11777">
    <property type="entry name" value="ALANYL-TRNA SYNTHETASE"/>
    <property type="match status" value="1"/>
</dbReference>
<dbReference type="Pfam" id="PF02272">
    <property type="entry name" value="DHHA1"/>
    <property type="match status" value="1"/>
</dbReference>
<dbReference type="Pfam" id="PF01411">
    <property type="entry name" value="tRNA-synt_2c"/>
    <property type="match status" value="1"/>
</dbReference>
<dbReference type="Pfam" id="PF07973">
    <property type="entry name" value="tRNA_SAD"/>
    <property type="match status" value="1"/>
</dbReference>
<dbReference type="PRINTS" id="PR00980">
    <property type="entry name" value="TRNASYNTHALA"/>
</dbReference>
<dbReference type="SMART" id="SM00863">
    <property type="entry name" value="tRNA_SAD"/>
    <property type="match status" value="1"/>
</dbReference>
<dbReference type="SUPFAM" id="SSF55681">
    <property type="entry name" value="Class II aaRS and biotin synthetases"/>
    <property type="match status" value="1"/>
</dbReference>
<dbReference type="SUPFAM" id="SSF101353">
    <property type="entry name" value="Putative anticodon-binding domain of alanyl-tRNA synthetase (AlaRS)"/>
    <property type="match status" value="1"/>
</dbReference>
<dbReference type="SUPFAM" id="SSF55186">
    <property type="entry name" value="ThrRS/AlaRS common domain"/>
    <property type="match status" value="1"/>
</dbReference>
<dbReference type="SUPFAM" id="SSF50447">
    <property type="entry name" value="Translation proteins"/>
    <property type="match status" value="1"/>
</dbReference>
<dbReference type="PROSITE" id="PS50860">
    <property type="entry name" value="AA_TRNA_LIGASE_II_ALA"/>
    <property type="match status" value="1"/>
</dbReference>
<comment type="function">
    <text evidence="1">Catalyzes the attachment of alanine to tRNA(Ala) in a two-step reaction: alanine is first activated by ATP to form Ala-AMP and then transferred to the acceptor end of tRNA(Ala). Also edits incorrectly charged Ser-tRNA(Ala) and Gly-tRNA(Ala) via its editing domain.</text>
</comment>
<comment type="catalytic activity">
    <reaction evidence="1">
        <text>tRNA(Ala) + L-alanine + ATP = L-alanyl-tRNA(Ala) + AMP + diphosphate</text>
        <dbReference type="Rhea" id="RHEA:12540"/>
        <dbReference type="Rhea" id="RHEA-COMP:9657"/>
        <dbReference type="Rhea" id="RHEA-COMP:9923"/>
        <dbReference type="ChEBI" id="CHEBI:30616"/>
        <dbReference type="ChEBI" id="CHEBI:33019"/>
        <dbReference type="ChEBI" id="CHEBI:57972"/>
        <dbReference type="ChEBI" id="CHEBI:78442"/>
        <dbReference type="ChEBI" id="CHEBI:78497"/>
        <dbReference type="ChEBI" id="CHEBI:456215"/>
        <dbReference type="EC" id="6.1.1.7"/>
    </reaction>
</comment>
<comment type="cofactor">
    <cofactor evidence="1">
        <name>Zn(2+)</name>
        <dbReference type="ChEBI" id="CHEBI:29105"/>
    </cofactor>
    <text evidence="1">Binds 1 zinc ion per subunit.</text>
</comment>
<comment type="subunit">
    <text evidence="1">Homotetramer.</text>
</comment>
<comment type="subcellular location">
    <subcellularLocation>
        <location evidence="1">Cytoplasm</location>
    </subcellularLocation>
</comment>
<comment type="domain">
    <text evidence="1">Consists of three domains; the N-terminal catalytic domain, the editing domain and the C-terminal C-Ala domain. The editing domain removes incorrectly charged amino acids, while the C-Ala domain, along with tRNA(Ala), serves as a bridge to cooperatively bring together the editing and aminoacylation centers thus stimulating deacylation of misacylated tRNAs.</text>
</comment>
<comment type="similarity">
    <text evidence="1">Belongs to the class-II aminoacyl-tRNA synthetase family.</text>
</comment>
<proteinExistence type="inferred from homology"/>
<protein>
    <recommendedName>
        <fullName evidence="1">Alanine--tRNA ligase</fullName>
        <ecNumber evidence="1">6.1.1.7</ecNumber>
    </recommendedName>
    <alternativeName>
        <fullName evidence="1">Alanyl-tRNA synthetase</fullName>
        <shortName evidence="1">AlaRS</shortName>
    </alternativeName>
</protein>
<name>SYA_SALTY</name>
<sequence length="876" mass="95899">MSKSTAEIRQAFLDFFHSKGHQVVASSSLVPNNDPTLLFTNAGMNQFKDVFLGLDKRNYSRATTSQRCVRAGGKHNDLENVGYTARHHTFFEMLGNFSFGDYFKHDAIQFAWELLTGENWFALPKERLWVTVYETDDEAYEIWEKEVGIPRERIIRIGDNKGAPYASDNFWQMGDTGPCGPCTEIFYDHGDHIWGGPPGSPEEDGDRYIEIWNIVFMQFNRQADGTMEPLPKPSVDTGMGLERIAAVLQHVNSNYDIDLFRTLIEAVAKVTGATDLGNKSLRVIADHIRSCAFLVADGVLPSNENRGYVLRRIIRRAVRHGNMLGAKETFFYKLVGPLIEVMGSAGEELKRQQAQVEQVLKTEEEQFARTLERGLALLDEELAKLQGDTLDGETAFRLYDTYGFPVDLTADVCRERNIKVDEAGFEAAMEEQRRRAREASGFGADYNAMIRVDSASEFKGYDHLELNGKVTALFVDGKAVEAINAGQEAVVVLDQTPFYAESGGQVGDKGELKGAGFTFAVDDTQKYGQAIGHLGKLSAGALKVGDAVQADVDEARRARIRLNHSATHLMHAALRQVLGTHVAQKGSLVSDKVLRFDFSHNEAMKPSEIREVEDLVNAQIRRNLPIETNIMDLDAAKAKGAMALFGEKYDERVRVLSMGDFSTELCGGTHASRTGDIGLFRIISESGTAAGIRRIEAVTGEGAMATVHAQSDRLNDIAHLLKGDSQNLGDKVRAVLERTRQLEKELQQLKDQAAAQESANLSSKAVDLNGVKLLVSELAGIEPKMLRTMVDDLKNQLGSTVIVLATVVEGKVSLIAGVSKDVTDRVKAGELIGMVAQQVGGKGGGRPDMAQAGGTDAAALPAALASVQGWVSAKLQ</sequence>
<reference key="1">
    <citation type="journal article" date="2001" name="Nature">
        <title>Complete genome sequence of Salmonella enterica serovar Typhimurium LT2.</title>
        <authorList>
            <person name="McClelland M."/>
            <person name="Sanderson K.E."/>
            <person name="Spieth J."/>
            <person name="Clifton S.W."/>
            <person name="Latreille P."/>
            <person name="Courtney L."/>
            <person name="Porwollik S."/>
            <person name="Ali J."/>
            <person name="Dante M."/>
            <person name="Du F."/>
            <person name="Hou S."/>
            <person name="Layman D."/>
            <person name="Leonard S."/>
            <person name="Nguyen C."/>
            <person name="Scott K."/>
            <person name="Holmes A."/>
            <person name="Grewal N."/>
            <person name="Mulvaney E."/>
            <person name="Ryan E."/>
            <person name="Sun H."/>
            <person name="Florea L."/>
            <person name="Miller W."/>
            <person name="Stoneking T."/>
            <person name="Nhan M."/>
            <person name="Waterston R."/>
            <person name="Wilson R.K."/>
        </authorList>
    </citation>
    <scope>NUCLEOTIDE SEQUENCE [LARGE SCALE GENOMIC DNA]</scope>
    <source>
        <strain>LT2 / SGSC1412 / ATCC 700720</strain>
    </source>
</reference>
<evidence type="ECO:0000255" key="1">
    <source>
        <dbReference type="HAMAP-Rule" id="MF_00036"/>
    </source>
</evidence>
<organism>
    <name type="scientific">Salmonella typhimurium (strain LT2 / SGSC1412 / ATCC 700720)</name>
    <dbReference type="NCBI Taxonomy" id="99287"/>
    <lineage>
        <taxon>Bacteria</taxon>
        <taxon>Pseudomonadati</taxon>
        <taxon>Pseudomonadota</taxon>
        <taxon>Gammaproteobacteria</taxon>
        <taxon>Enterobacterales</taxon>
        <taxon>Enterobacteriaceae</taxon>
        <taxon>Salmonella</taxon>
    </lineage>
</organism>
<gene>
    <name evidence="1" type="primary">alaS</name>
    <name type="ordered locus">STM2827</name>
</gene>